<feature type="chain" id="PRO_0000057113" description="Uridine diphosphate glucose pyrophosphatase NUDT14">
    <location>
        <begin position="1"/>
        <end position="222"/>
    </location>
</feature>
<feature type="domain" description="Nudix hydrolase" evidence="1">
    <location>
        <begin position="38"/>
        <end position="206"/>
    </location>
</feature>
<feature type="short sequence motif" description="Nudix box">
    <location>
        <begin position="111"/>
        <end position="129"/>
    </location>
</feature>
<feature type="strand" evidence="5">
    <location>
        <begin position="5"/>
        <end position="11"/>
    </location>
</feature>
<feature type="strand" evidence="5">
    <location>
        <begin position="20"/>
        <end position="27"/>
    </location>
</feature>
<feature type="strand" evidence="5">
    <location>
        <begin position="30"/>
        <end position="37"/>
    </location>
</feature>
<feature type="strand" evidence="5">
    <location>
        <begin position="42"/>
        <end position="49"/>
    </location>
</feature>
<feature type="turn" evidence="5">
    <location>
        <begin position="50"/>
        <end position="53"/>
    </location>
</feature>
<feature type="strand" evidence="5">
    <location>
        <begin position="54"/>
        <end position="61"/>
    </location>
</feature>
<feature type="helix" evidence="5">
    <location>
        <begin position="63"/>
        <end position="73"/>
    </location>
</feature>
<feature type="turn" evidence="5">
    <location>
        <begin position="75"/>
        <end position="80"/>
    </location>
</feature>
<feature type="strand" evidence="5">
    <location>
        <begin position="83"/>
        <end position="85"/>
    </location>
</feature>
<feature type="helix" evidence="5">
    <location>
        <begin position="95"/>
        <end position="98"/>
    </location>
</feature>
<feature type="strand" evidence="5">
    <location>
        <begin position="99"/>
        <end position="102"/>
    </location>
</feature>
<feature type="strand" evidence="5">
    <location>
        <begin position="104"/>
        <end position="107"/>
    </location>
</feature>
<feature type="strand" evidence="4">
    <location>
        <begin position="110"/>
        <end position="112"/>
    </location>
</feature>
<feature type="helix" evidence="5">
    <location>
        <begin position="115"/>
        <end position="127"/>
    </location>
</feature>
<feature type="helix" evidence="5">
    <location>
        <begin position="133"/>
        <end position="135"/>
    </location>
</feature>
<feature type="strand" evidence="5">
    <location>
        <begin position="137"/>
        <end position="144"/>
    </location>
</feature>
<feature type="turn" evidence="5">
    <location>
        <begin position="146"/>
        <end position="148"/>
    </location>
</feature>
<feature type="strand" evidence="5">
    <location>
        <begin position="151"/>
        <end position="160"/>
    </location>
</feature>
<feature type="helix" evidence="5">
    <location>
        <begin position="162"/>
        <end position="164"/>
    </location>
</feature>
<feature type="strand" evidence="5">
    <location>
        <begin position="179"/>
        <end position="186"/>
    </location>
</feature>
<feature type="helix" evidence="5">
    <location>
        <begin position="189"/>
        <end position="194"/>
    </location>
</feature>
<feature type="helix" evidence="5">
    <location>
        <begin position="202"/>
        <end position="214"/>
    </location>
</feature>
<feature type="helix" evidence="5">
    <location>
        <begin position="216"/>
        <end position="218"/>
    </location>
</feature>
<accession>O95848</accession>
<accession>Q86SJ8</accession>
<protein>
    <recommendedName>
        <fullName>Uridine diphosphate glucose pyrophosphatase NUDT14</fullName>
        <shortName>UDPG pyrophosphatase</shortName>
        <shortName>UGPPase</shortName>
        <ecNumber>3.6.1.45</ecNumber>
    </recommendedName>
    <alternativeName>
        <fullName>Nucleoside diphosphate-linked moiety X motif 14</fullName>
        <shortName>Nudix motif 14</shortName>
    </alternativeName>
</protein>
<reference key="1">
    <citation type="journal article" date="2000" name="Genomics">
        <title>Characterization, chromosomal localization, and the complete 30-kb DNA sequence of the human Jagged2 (JAG2) gene.</title>
        <authorList>
            <person name="Deng Y."/>
            <person name="Madan A."/>
            <person name="Banta A.B."/>
            <person name="Friedman C."/>
            <person name="Trask B.J."/>
            <person name="Hood L."/>
            <person name="Li L."/>
        </authorList>
    </citation>
    <scope>NUCLEOTIDE SEQUENCE [GENOMIC DNA]</scope>
</reference>
<reference key="2">
    <citation type="journal article" date="2003" name="Biochem. J.">
        <title>Cloning, expression and characterization of a mammalian Nudix hydrolase-like enzyme that cleaves the pyrophosphate bond of UDP-glucose.</title>
        <authorList>
            <person name="Yagi T."/>
            <person name="Baroja-Fernandez E."/>
            <person name="Yamamoto R."/>
            <person name="Munoz F.J."/>
            <person name="Akazawa T."/>
            <person name="Hong K.S."/>
            <person name="Pozueta-Romero J."/>
        </authorList>
    </citation>
    <scope>NUCLEOTIDE SEQUENCE [MRNA]</scope>
    <scope>CHARACTERIZATION</scope>
    <scope>SUBCELLULAR LOCATION</scope>
    <scope>SUBUNIT</scope>
    <source>
        <tissue>Thyroid</tissue>
    </source>
</reference>
<reference key="3">
    <citation type="journal article" date="2003" name="Nature">
        <title>The DNA sequence and analysis of human chromosome 14.</title>
        <authorList>
            <person name="Heilig R."/>
            <person name="Eckenberg R."/>
            <person name="Petit J.-L."/>
            <person name="Fonknechten N."/>
            <person name="Da Silva C."/>
            <person name="Cattolico L."/>
            <person name="Levy M."/>
            <person name="Barbe V."/>
            <person name="De Berardinis V."/>
            <person name="Ureta-Vidal A."/>
            <person name="Pelletier E."/>
            <person name="Vico V."/>
            <person name="Anthouard V."/>
            <person name="Rowen L."/>
            <person name="Madan A."/>
            <person name="Qin S."/>
            <person name="Sun H."/>
            <person name="Du H."/>
            <person name="Pepin K."/>
            <person name="Artiguenave F."/>
            <person name="Robert C."/>
            <person name="Cruaud C."/>
            <person name="Bruels T."/>
            <person name="Jaillon O."/>
            <person name="Friedlander L."/>
            <person name="Samson G."/>
            <person name="Brottier P."/>
            <person name="Cure S."/>
            <person name="Segurens B."/>
            <person name="Aniere F."/>
            <person name="Samain S."/>
            <person name="Crespeau H."/>
            <person name="Abbasi N."/>
            <person name="Aiach N."/>
            <person name="Boscus D."/>
            <person name="Dickhoff R."/>
            <person name="Dors M."/>
            <person name="Dubois I."/>
            <person name="Friedman C."/>
            <person name="Gouyvenoux M."/>
            <person name="James R."/>
            <person name="Madan A."/>
            <person name="Mairey-Estrada B."/>
            <person name="Mangenot S."/>
            <person name="Martins N."/>
            <person name="Menard M."/>
            <person name="Oztas S."/>
            <person name="Ratcliffe A."/>
            <person name="Shaffer T."/>
            <person name="Trask B."/>
            <person name="Vacherie B."/>
            <person name="Bellemere C."/>
            <person name="Belser C."/>
            <person name="Besnard-Gonnet M."/>
            <person name="Bartol-Mavel D."/>
            <person name="Boutard M."/>
            <person name="Briez-Silla S."/>
            <person name="Combette S."/>
            <person name="Dufosse-Laurent V."/>
            <person name="Ferron C."/>
            <person name="Lechaplais C."/>
            <person name="Louesse C."/>
            <person name="Muselet D."/>
            <person name="Magdelenat G."/>
            <person name="Pateau E."/>
            <person name="Petit E."/>
            <person name="Sirvain-Trukniewicz P."/>
            <person name="Trybou A."/>
            <person name="Vega-Czarny N."/>
            <person name="Bataille E."/>
            <person name="Bluet E."/>
            <person name="Bordelais I."/>
            <person name="Dubois M."/>
            <person name="Dumont C."/>
            <person name="Guerin T."/>
            <person name="Haffray S."/>
            <person name="Hammadi R."/>
            <person name="Muanga J."/>
            <person name="Pellouin V."/>
            <person name="Robert D."/>
            <person name="Wunderle E."/>
            <person name="Gauguet G."/>
            <person name="Roy A."/>
            <person name="Sainte-Marthe L."/>
            <person name="Verdier J."/>
            <person name="Verdier-Discala C."/>
            <person name="Hillier L.W."/>
            <person name="Fulton L."/>
            <person name="McPherson J."/>
            <person name="Matsuda F."/>
            <person name="Wilson R."/>
            <person name="Scarpelli C."/>
            <person name="Gyapay G."/>
            <person name="Wincker P."/>
            <person name="Saurin W."/>
            <person name="Quetier F."/>
            <person name="Waterston R."/>
            <person name="Hood L."/>
            <person name="Weissenbach J."/>
        </authorList>
    </citation>
    <scope>NUCLEOTIDE SEQUENCE [LARGE SCALE GENOMIC DNA]</scope>
</reference>
<reference key="4">
    <citation type="journal article" date="2004" name="Genome Res.">
        <title>The status, quality, and expansion of the NIH full-length cDNA project: the Mammalian Gene Collection (MGC).</title>
        <authorList>
            <consortium name="The MGC Project Team"/>
        </authorList>
    </citation>
    <scope>NUCLEOTIDE SEQUENCE [LARGE SCALE MRNA]</scope>
    <source>
        <tissue>Placenta</tissue>
    </source>
</reference>
<reference key="5">
    <citation type="submission" date="2011-02" db="PDB data bank">
        <title>Crystal structure of human uridine diphosphate glucose pyrophosphatase (NUDT14).</title>
        <authorList>
            <consortium name="Structural genomics consortium (SGC)"/>
        </authorList>
    </citation>
    <scope>X-RAY CRYSTALLOGRAPHY (2.7 ANGSTROMS) OF 28-222</scope>
</reference>
<proteinExistence type="evidence at protein level"/>
<sequence length="222" mass="24118">MERIEGASVGRCAASPYLRPLTLHYRQNGAQKSWDFMKTHDSVTVLLFNSSRRSLVLVKQFRPAVYAGEVERRFPGSLAAVDQDGPRELQPALPGSAGVTVELCAGLVDQPGLSLEEVACKEAWEECGYHLAPSDLRRVATYWSGVGLTGSRQTMFYTEVTDAQRSGPGGGLVEEGELIEVVHLPLEGAQAFADDPDIPKTLGVIFGVSWFLSQVAPNLDLQ</sequence>
<keyword id="KW-0002">3D-structure</keyword>
<keyword id="KW-0963">Cytoplasm</keyword>
<keyword id="KW-0378">Hydrolase</keyword>
<keyword id="KW-0460">Magnesium</keyword>
<keyword id="KW-1267">Proteomics identification</keyword>
<keyword id="KW-1185">Reference proteome</keyword>
<organism>
    <name type="scientific">Homo sapiens</name>
    <name type="common">Human</name>
    <dbReference type="NCBI Taxonomy" id="9606"/>
    <lineage>
        <taxon>Eukaryota</taxon>
        <taxon>Metazoa</taxon>
        <taxon>Chordata</taxon>
        <taxon>Craniata</taxon>
        <taxon>Vertebrata</taxon>
        <taxon>Euteleostomi</taxon>
        <taxon>Mammalia</taxon>
        <taxon>Eutheria</taxon>
        <taxon>Euarchontoglires</taxon>
        <taxon>Primates</taxon>
        <taxon>Haplorrhini</taxon>
        <taxon>Catarrhini</taxon>
        <taxon>Hominidae</taxon>
        <taxon>Homo</taxon>
    </lineage>
</organism>
<comment type="function">
    <text>Hydrolyzes UDP-glucose to glucose 1-phosphate and UMP and ADP-ribose to ribose 5-phosphate and AMP. The physiological substrate is probably UDP-glucose. Poor activity on other substrates such as ADP-glucose, CDP-glucose, GDP-glucose and GDP-mannose.</text>
</comment>
<comment type="catalytic activity">
    <reaction>
        <text>UDP-sugar + H2O = UMP + alpha-D-aldose 1-phosphate.</text>
        <dbReference type="EC" id="3.6.1.45"/>
    </reaction>
</comment>
<comment type="cofactor">
    <cofactor>
        <name>Mg(2+)</name>
        <dbReference type="ChEBI" id="CHEBI:18420"/>
    </cofactor>
</comment>
<comment type="biophysicochemical properties">
    <phDependence>
        <text>Optimum pH is 8.0-9.5.</text>
    </phDependence>
</comment>
<comment type="subunit">
    <text evidence="2">Homodimer.</text>
</comment>
<comment type="interaction">
    <interactant intactId="EBI-536866">
        <id>O95848</id>
    </interactant>
    <interactant intactId="EBI-365961">
        <id>P10398</id>
        <label>ARAF</label>
    </interactant>
    <organismsDiffer>false</organismsDiffer>
    <experiments>3</experiments>
</comment>
<comment type="interaction">
    <interactant intactId="EBI-536866">
        <id>O95848</id>
    </interactant>
    <interactant intactId="EBI-739832">
        <id>Q8TBB1</id>
        <label>LNX1</label>
    </interactant>
    <organismsDiffer>false</organismsDiffer>
    <experiments>8</experiments>
</comment>
<comment type="interaction">
    <interactant intactId="EBI-536866">
        <id>O95848</id>
    </interactant>
    <interactant intactId="EBI-740897">
        <id>Q9GZT8</id>
        <label>NIF3L1</label>
    </interactant>
    <organismsDiffer>false</organismsDiffer>
    <experiments>6</experiments>
</comment>
<comment type="interaction">
    <interactant intactId="EBI-536866">
        <id>O95848</id>
    </interactant>
    <interactant intactId="EBI-741158">
        <id>Q96HA8</id>
        <label>NTAQ1</label>
    </interactant>
    <organismsDiffer>false</organismsDiffer>
    <experiments>4</experiments>
</comment>
<comment type="interaction">
    <interactant intactId="EBI-536866">
        <id>O95848</id>
    </interactant>
    <interactant intactId="EBI-536866">
        <id>O95848</id>
        <label>NUDT14</label>
    </interactant>
    <organismsDiffer>false</organismsDiffer>
    <experiments>5</experiments>
</comment>
<comment type="interaction">
    <interactant intactId="EBI-536866">
        <id>O95848</id>
    </interactant>
    <interactant intactId="EBI-307352">
        <id>Q04864</id>
        <label>REL</label>
    </interactant>
    <organismsDiffer>false</organismsDiffer>
    <experiments>3</experiments>
</comment>
<comment type="interaction">
    <interactant intactId="EBI-536866">
        <id>O95848</id>
    </interactant>
    <interactant intactId="EBI-11139477">
        <id>Q96N21</id>
        <label>TEPSIN</label>
    </interactant>
    <organismsDiffer>false</organismsDiffer>
    <experiments>3</experiments>
</comment>
<comment type="interaction">
    <interactant intactId="EBI-536866">
        <id>O95848</id>
    </interactant>
    <interactant intactId="EBI-750109">
        <id>Q9NYB0</id>
        <label>TERF2IP</label>
    </interactant>
    <organismsDiffer>false</organismsDiffer>
    <experiments>2</experiments>
</comment>
<comment type="interaction">
    <interactant intactId="EBI-536866">
        <id>O95848</id>
    </interactant>
    <interactant intactId="EBI-597063">
        <id>Q8TBK6</id>
        <label>ZCCHC10</label>
    </interactant>
    <organismsDiffer>false</organismsDiffer>
    <experiments>3</experiments>
</comment>
<comment type="subcellular location">
    <subcellularLocation>
        <location evidence="2">Cytoplasm</location>
    </subcellularLocation>
</comment>
<comment type="similarity">
    <text evidence="3">Belongs to the Nudix hydrolase family.</text>
</comment>
<comment type="sequence caution" evidence="3">
    <conflict type="erroneous initiation">
        <sequence resource="EMBL-CDS" id="AAD15563"/>
    </conflict>
</comment>
<dbReference type="EC" id="3.6.1.45"/>
<dbReference type="EMBL" id="AF111170">
    <property type="protein sequence ID" value="AAD15563.1"/>
    <property type="status" value="ALT_INIT"/>
    <property type="molecule type" value="Genomic_DNA"/>
</dbReference>
<dbReference type="EMBL" id="AB087802">
    <property type="protein sequence ID" value="BAC65455.1"/>
    <property type="molecule type" value="mRNA"/>
</dbReference>
<dbReference type="EMBL" id="AL512355">
    <property type="status" value="NOT_ANNOTATED_CDS"/>
    <property type="molecule type" value="Genomic_DNA"/>
</dbReference>
<dbReference type="EMBL" id="BC041584">
    <property type="protein sequence ID" value="AAH41584.1"/>
    <property type="molecule type" value="mRNA"/>
</dbReference>
<dbReference type="CCDS" id="CCDS10000.1"/>
<dbReference type="RefSeq" id="NP_803877.2">
    <property type="nucleotide sequence ID" value="NM_177533.4"/>
</dbReference>
<dbReference type="PDB" id="3Q91">
    <property type="method" value="X-ray"/>
    <property type="resolution" value="2.70 A"/>
    <property type="chains" value="A/B/C/D=28-222"/>
</dbReference>
<dbReference type="PDB" id="8OTV">
    <property type="method" value="X-ray"/>
    <property type="resolution" value="1.82 A"/>
    <property type="chains" value="A/B=1-222"/>
</dbReference>
<dbReference type="PDBsum" id="3Q91"/>
<dbReference type="PDBsum" id="8OTV"/>
<dbReference type="SMR" id="O95848"/>
<dbReference type="BioGRID" id="129152">
    <property type="interactions" value="21"/>
</dbReference>
<dbReference type="FunCoup" id="O95848">
    <property type="interactions" value="567"/>
</dbReference>
<dbReference type="IntAct" id="O95848">
    <property type="interactions" value="17"/>
</dbReference>
<dbReference type="STRING" id="9606.ENSP00000376349"/>
<dbReference type="BindingDB" id="O95848"/>
<dbReference type="ChEMBL" id="CHEMBL4105943"/>
<dbReference type="iPTMnet" id="O95848"/>
<dbReference type="PhosphoSitePlus" id="O95848"/>
<dbReference type="BioMuta" id="NUDT14"/>
<dbReference type="jPOST" id="O95848"/>
<dbReference type="MassIVE" id="O95848"/>
<dbReference type="PaxDb" id="9606-ENSP00000376349"/>
<dbReference type="PeptideAtlas" id="O95848"/>
<dbReference type="ProteomicsDB" id="51089"/>
<dbReference type="Antibodypedia" id="49103">
    <property type="antibodies" value="65 antibodies from 17 providers"/>
</dbReference>
<dbReference type="DNASU" id="256281"/>
<dbReference type="Ensembl" id="ENST00000392568.7">
    <property type="protein sequence ID" value="ENSP00000376349.2"/>
    <property type="gene ID" value="ENSG00000183828.15"/>
</dbReference>
<dbReference type="GeneID" id="256281"/>
<dbReference type="KEGG" id="hsa:256281"/>
<dbReference type="MANE-Select" id="ENST00000392568.7">
    <property type="protein sequence ID" value="ENSP00000376349.2"/>
    <property type="RefSeq nucleotide sequence ID" value="NM_177533.5"/>
    <property type="RefSeq protein sequence ID" value="NP_803877.2"/>
</dbReference>
<dbReference type="UCSC" id="uc010tyn.4">
    <property type="organism name" value="human"/>
</dbReference>
<dbReference type="AGR" id="HGNC:20141"/>
<dbReference type="CTD" id="256281"/>
<dbReference type="DisGeNET" id="256281"/>
<dbReference type="GeneCards" id="NUDT14"/>
<dbReference type="HGNC" id="HGNC:20141">
    <property type="gene designation" value="NUDT14"/>
</dbReference>
<dbReference type="HPA" id="ENSG00000183828">
    <property type="expression patterns" value="Low tissue specificity"/>
</dbReference>
<dbReference type="MIM" id="609219">
    <property type="type" value="gene"/>
</dbReference>
<dbReference type="neXtProt" id="NX_O95848"/>
<dbReference type="OpenTargets" id="ENSG00000183828"/>
<dbReference type="PharmGKB" id="PA134971372"/>
<dbReference type="VEuPathDB" id="HostDB:ENSG00000183828"/>
<dbReference type="eggNOG" id="KOG4432">
    <property type="taxonomic scope" value="Eukaryota"/>
</dbReference>
<dbReference type="GeneTree" id="ENSGT00940000154045"/>
<dbReference type="HOGENOM" id="CLU_062658_1_0_1"/>
<dbReference type="InParanoid" id="O95848"/>
<dbReference type="OMA" id="YTYELCA"/>
<dbReference type="OrthoDB" id="10249920at2759"/>
<dbReference type="PAN-GO" id="O95848">
    <property type="GO annotations" value="3 GO annotations based on evolutionary models"/>
</dbReference>
<dbReference type="PhylomeDB" id="O95848"/>
<dbReference type="TreeFam" id="TF313661"/>
<dbReference type="BRENDA" id="3.6.1.45">
    <property type="organism ID" value="2681"/>
</dbReference>
<dbReference type="PathwayCommons" id="O95848"/>
<dbReference type="Reactome" id="R-HSA-480985">
    <property type="pathway name" value="Synthesis of dolichyl-phosphate-glucose"/>
</dbReference>
<dbReference type="SignaLink" id="O95848"/>
<dbReference type="BioGRID-ORCS" id="256281">
    <property type="hits" value="12 hits in 1148 CRISPR screens"/>
</dbReference>
<dbReference type="EvolutionaryTrace" id="O95848"/>
<dbReference type="GenomeRNAi" id="256281"/>
<dbReference type="Pharos" id="O95848">
    <property type="development level" value="Tbio"/>
</dbReference>
<dbReference type="PRO" id="PR:O95848"/>
<dbReference type="Proteomes" id="UP000005640">
    <property type="component" value="Chromosome 14"/>
</dbReference>
<dbReference type="RNAct" id="O95848">
    <property type="molecule type" value="protein"/>
</dbReference>
<dbReference type="Bgee" id="ENSG00000183828">
    <property type="expression patterns" value="Expressed in adenohypophysis and 147 other cell types or tissues"/>
</dbReference>
<dbReference type="ExpressionAtlas" id="O95848">
    <property type="expression patterns" value="baseline and differential"/>
</dbReference>
<dbReference type="GO" id="GO:0005829">
    <property type="term" value="C:cytosol"/>
    <property type="evidence" value="ECO:0000304"/>
    <property type="project" value="Reactome"/>
</dbReference>
<dbReference type="GO" id="GO:0047631">
    <property type="term" value="F:ADP-ribose diphosphatase activity"/>
    <property type="evidence" value="ECO:0007669"/>
    <property type="project" value="Ensembl"/>
</dbReference>
<dbReference type="GO" id="GO:0042802">
    <property type="term" value="F:identical protein binding"/>
    <property type="evidence" value="ECO:0000353"/>
    <property type="project" value="IntAct"/>
</dbReference>
<dbReference type="GO" id="GO:0046872">
    <property type="term" value="F:metal ion binding"/>
    <property type="evidence" value="ECO:0007669"/>
    <property type="project" value="InterPro"/>
</dbReference>
<dbReference type="GO" id="GO:0008768">
    <property type="term" value="F:UDP-sugar diphosphatase activity"/>
    <property type="evidence" value="ECO:0000318"/>
    <property type="project" value="GO_Central"/>
</dbReference>
<dbReference type="GO" id="GO:0006753">
    <property type="term" value="P:nucleoside phosphate metabolic process"/>
    <property type="evidence" value="ECO:0000318"/>
    <property type="project" value="GO_Central"/>
</dbReference>
<dbReference type="GO" id="GO:0018279">
    <property type="term" value="P:protein N-linked glycosylation via asparagine"/>
    <property type="evidence" value="ECO:0000304"/>
    <property type="project" value="Reactome"/>
</dbReference>
<dbReference type="GO" id="GO:0019693">
    <property type="term" value="P:ribose phosphate metabolic process"/>
    <property type="evidence" value="ECO:0000318"/>
    <property type="project" value="GO_Central"/>
</dbReference>
<dbReference type="CDD" id="cd18887">
    <property type="entry name" value="NUDIX_UGPPase_Nudt14"/>
    <property type="match status" value="1"/>
</dbReference>
<dbReference type="FunFam" id="3.90.79.10:FF:000035">
    <property type="entry name" value="Uridine diphosphate glucose pyrophosphatase"/>
    <property type="match status" value="1"/>
</dbReference>
<dbReference type="Gene3D" id="3.90.79.10">
    <property type="entry name" value="Nucleoside Triphosphate Pyrophosphohydrolase"/>
    <property type="match status" value="1"/>
</dbReference>
<dbReference type="InterPro" id="IPR004385">
    <property type="entry name" value="NDP_pyrophosphatase"/>
</dbReference>
<dbReference type="InterPro" id="IPR015797">
    <property type="entry name" value="NUDIX_hydrolase-like_dom_sf"/>
</dbReference>
<dbReference type="InterPro" id="IPR000086">
    <property type="entry name" value="NUDIX_hydrolase_dom"/>
</dbReference>
<dbReference type="NCBIfam" id="TIGR00052">
    <property type="entry name" value="nudix-type nucleoside diphosphatase, YffH/AdpP family"/>
    <property type="match status" value="1"/>
</dbReference>
<dbReference type="PANTHER" id="PTHR11839">
    <property type="entry name" value="UDP/ADP-SUGAR PYROPHOSPHATASE"/>
    <property type="match status" value="1"/>
</dbReference>
<dbReference type="PANTHER" id="PTHR11839:SF15">
    <property type="entry name" value="URIDINE DIPHOSPHATE GLUCOSE PYROPHOSPHATASE NUDT14"/>
    <property type="match status" value="1"/>
</dbReference>
<dbReference type="SUPFAM" id="SSF55811">
    <property type="entry name" value="Nudix"/>
    <property type="match status" value="1"/>
</dbReference>
<dbReference type="PROSITE" id="PS51462">
    <property type="entry name" value="NUDIX"/>
    <property type="match status" value="1"/>
</dbReference>
<evidence type="ECO:0000255" key="1">
    <source>
        <dbReference type="PROSITE-ProRule" id="PRU00794"/>
    </source>
</evidence>
<evidence type="ECO:0000269" key="2">
    <source>
    </source>
</evidence>
<evidence type="ECO:0000305" key="3"/>
<evidence type="ECO:0007829" key="4">
    <source>
        <dbReference type="PDB" id="3Q91"/>
    </source>
</evidence>
<evidence type="ECO:0007829" key="5">
    <source>
        <dbReference type="PDB" id="8OTV"/>
    </source>
</evidence>
<gene>
    <name type="primary">NUDT14</name>
    <name type="synonym">UGPP</name>
</gene>
<name>NUD14_HUMAN</name>